<protein>
    <recommendedName>
        <fullName evidence="1">4-hydroxy-tetrahydrodipicolinate reductase</fullName>
        <shortName evidence="1">HTPA reductase</shortName>
        <ecNumber evidence="1">1.17.1.8</ecNumber>
    </recommendedName>
</protein>
<evidence type="ECO:0000255" key="1">
    <source>
        <dbReference type="HAMAP-Rule" id="MF_00102"/>
    </source>
</evidence>
<evidence type="ECO:0000305" key="2"/>
<organism>
    <name type="scientific">Geobacillus kaustophilus (strain HTA426)</name>
    <dbReference type="NCBI Taxonomy" id="235909"/>
    <lineage>
        <taxon>Bacteria</taxon>
        <taxon>Bacillati</taxon>
        <taxon>Bacillota</taxon>
        <taxon>Bacilli</taxon>
        <taxon>Bacillales</taxon>
        <taxon>Anoxybacillaceae</taxon>
        <taxon>Geobacillus</taxon>
        <taxon>Geobacillus thermoleovorans group</taxon>
    </lineage>
</organism>
<reference key="1">
    <citation type="journal article" date="2004" name="Nucleic Acids Res.">
        <title>Thermoadaptation trait revealed by the genome sequence of thermophilic Geobacillus kaustophilus.</title>
        <authorList>
            <person name="Takami H."/>
            <person name="Takaki Y."/>
            <person name="Chee G.-J."/>
            <person name="Nishi S."/>
            <person name="Shimamura S."/>
            <person name="Suzuki H."/>
            <person name="Matsui S."/>
            <person name="Uchiyama I."/>
        </authorList>
    </citation>
    <scope>NUCLEOTIDE SEQUENCE [LARGE SCALE GENOMIC DNA]</scope>
    <source>
        <strain>HTA426</strain>
    </source>
</reference>
<dbReference type="EC" id="1.17.1.8" evidence="1"/>
<dbReference type="EMBL" id="BA000043">
    <property type="protein sequence ID" value="BAD76470.1"/>
    <property type="molecule type" value="Genomic_DNA"/>
</dbReference>
<dbReference type="RefSeq" id="WP_011231670.1">
    <property type="nucleotide sequence ID" value="NC_006510.1"/>
</dbReference>
<dbReference type="SMR" id="Q5KXW6"/>
<dbReference type="STRING" id="235909.GK2185"/>
<dbReference type="KEGG" id="gka:GK2185"/>
<dbReference type="eggNOG" id="COG0289">
    <property type="taxonomic scope" value="Bacteria"/>
</dbReference>
<dbReference type="HOGENOM" id="CLU_047479_0_1_9"/>
<dbReference type="UniPathway" id="UPA00034">
    <property type="reaction ID" value="UER00018"/>
</dbReference>
<dbReference type="Proteomes" id="UP000001172">
    <property type="component" value="Chromosome"/>
</dbReference>
<dbReference type="GO" id="GO:0005829">
    <property type="term" value="C:cytosol"/>
    <property type="evidence" value="ECO:0007669"/>
    <property type="project" value="TreeGrafter"/>
</dbReference>
<dbReference type="GO" id="GO:0008839">
    <property type="term" value="F:4-hydroxy-tetrahydrodipicolinate reductase"/>
    <property type="evidence" value="ECO:0007669"/>
    <property type="project" value="UniProtKB-EC"/>
</dbReference>
<dbReference type="GO" id="GO:0051287">
    <property type="term" value="F:NAD binding"/>
    <property type="evidence" value="ECO:0007669"/>
    <property type="project" value="UniProtKB-UniRule"/>
</dbReference>
<dbReference type="GO" id="GO:0050661">
    <property type="term" value="F:NADP binding"/>
    <property type="evidence" value="ECO:0007669"/>
    <property type="project" value="UniProtKB-UniRule"/>
</dbReference>
<dbReference type="GO" id="GO:0016726">
    <property type="term" value="F:oxidoreductase activity, acting on CH or CH2 groups, NAD or NADP as acceptor"/>
    <property type="evidence" value="ECO:0007669"/>
    <property type="project" value="UniProtKB-UniRule"/>
</dbReference>
<dbReference type="GO" id="GO:0019877">
    <property type="term" value="P:diaminopimelate biosynthetic process"/>
    <property type="evidence" value="ECO:0007669"/>
    <property type="project" value="UniProtKB-UniRule"/>
</dbReference>
<dbReference type="GO" id="GO:0009089">
    <property type="term" value="P:lysine biosynthetic process via diaminopimelate"/>
    <property type="evidence" value="ECO:0007669"/>
    <property type="project" value="UniProtKB-UniRule"/>
</dbReference>
<dbReference type="CDD" id="cd02274">
    <property type="entry name" value="DHDPR_N"/>
    <property type="match status" value="1"/>
</dbReference>
<dbReference type="FunFam" id="3.30.360.10:FF:000009">
    <property type="entry name" value="4-hydroxy-tetrahydrodipicolinate reductase"/>
    <property type="match status" value="1"/>
</dbReference>
<dbReference type="FunFam" id="3.40.50.720:FF:000180">
    <property type="entry name" value="4-hydroxy-tetrahydrodipicolinate reductase"/>
    <property type="match status" value="1"/>
</dbReference>
<dbReference type="Gene3D" id="3.30.360.10">
    <property type="entry name" value="Dihydrodipicolinate Reductase, domain 2"/>
    <property type="match status" value="1"/>
</dbReference>
<dbReference type="Gene3D" id="3.40.50.720">
    <property type="entry name" value="NAD(P)-binding Rossmann-like Domain"/>
    <property type="match status" value="1"/>
</dbReference>
<dbReference type="HAMAP" id="MF_00102">
    <property type="entry name" value="DapB"/>
    <property type="match status" value="1"/>
</dbReference>
<dbReference type="InterPro" id="IPR022663">
    <property type="entry name" value="DapB_C"/>
</dbReference>
<dbReference type="InterPro" id="IPR000846">
    <property type="entry name" value="DapB_N"/>
</dbReference>
<dbReference type="InterPro" id="IPR022664">
    <property type="entry name" value="DapB_N_CS"/>
</dbReference>
<dbReference type="InterPro" id="IPR023940">
    <property type="entry name" value="DHDPR_bac"/>
</dbReference>
<dbReference type="InterPro" id="IPR036291">
    <property type="entry name" value="NAD(P)-bd_dom_sf"/>
</dbReference>
<dbReference type="NCBIfam" id="TIGR00036">
    <property type="entry name" value="dapB"/>
    <property type="match status" value="1"/>
</dbReference>
<dbReference type="PANTHER" id="PTHR20836:SF0">
    <property type="entry name" value="4-HYDROXY-TETRAHYDRODIPICOLINATE REDUCTASE 1, CHLOROPLASTIC-RELATED"/>
    <property type="match status" value="1"/>
</dbReference>
<dbReference type="PANTHER" id="PTHR20836">
    <property type="entry name" value="DIHYDRODIPICOLINATE REDUCTASE"/>
    <property type="match status" value="1"/>
</dbReference>
<dbReference type="Pfam" id="PF05173">
    <property type="entry name" value="DapB_C"/>
    <property type="match status" value="1"/>
</dbReference>
<dbReference type="Pfam" id="PF01113">
    <property type="entry name" value="DapB_N"/>
    <property type="match status" value="1"/>
</dbReference>
<dbReference type="PIRSF" id="PIRSF000161">
    <property type="entry name" value="DHPR"/>
    <property type="match status" value="1"/>
</dbReference>
<dbReference type="SUPFAM" id="SSF55347">
    <property type="entry name" value="Glyceraldehyde-3-phosphate dehydrogenase-like, C-terminal domain"/>
    <property type="match status" value="1"/>
</dbReference>
<dbReference type="SUPFAM" id="SSF51735">
    <property type="entry name" value="NAD(P)-binding Rossmann-fold domains"/>
    <property type="match status" value="1"/>
</dbReference>
<dbReference type="PROSITE" id="PS01298">
    <property type="entry name" value="DAPB"/>
    <property type="match status" value="1"/>
</dbReference>
<comment type="function">
    <text evidence="1">Catalyzes the conversion of 4-hydroxy-tetrahydrodipicolinate (HTPA) to tetrahydrodipicolinate.</text>
</comment>
<comment type="catalytic activity">
    <reaction evidence="1">
        <text>(S)-2,3,4,5-tetrahydrodipicolinate + NAD(+) + H2O = (2S,4S)-4-hydroxy-2,3,4,5-tetrahydrodipicolinate + NADH + H(+)</text>
        <dbReference type="Rhea" id="RHEA:35323"/>
        <dbReference type="ChEBI" id="CHEBI:15377"/>
        <dbReference type="ChEBI" id="CHEBI:15378"/>
        <dbReference type="ChEBI" id="CHEBI:16845"/>
        <dbReference type="ChEBI" id="CHEBI:57540"/>
        <dbReference type="ChEBI" id="CHEBI:57945"/>
        <dbReference type="ChEBI" id="CHEBI:67139"/>
        <dbReference type="EC" id="1.17.1.8"/>
    </reaction>
</comment>
<comment type="catalytic activity">
    <reaction evidence="1">
        <text>(S)-2,3,4,5-tetrahydrodipicolinate + NADP(+) + H2O = (2S,4S)-4-hydroxy-2,3,4,5-tetrahydrodipicolinate + NADPH + H(+)</text>
        <dbReference type="Rhea" id="RHEA:35331"/>
        <dbReference type="ChEBI" id="CHEBI:15377"/>
        <dbReference type="ChEBI" id="CHEBI:15378"/>
        <dbReference type="ChEBI" id="CHEBI:16845"/>
        <dbReference type="ChEBI" id="CHEBI:57783"/>
        <dbReference type="ChEBI" id="CHEBI:58349"/>
        <dbReference type="ChEBI" id="CHEBI:67139"/>
        <dbReference type="EC" id="1.17.1.8"/>
    </reaction>
</comment>
<comment type="pathway">
    <text evidence="1">Amino-acid biosynthesis; L-lysine biosynthesis via DAP pathway; (S)-tetrahydrodipicolinate from L-aspartate: step 4/4.</text>
</comment>
<comment type="subcellular location">
    <subcellularLocation>
        <location evidence="1">Cytoplasm</location>
    </subcellularLocation>
</comment>
<comment type="similarity">
    <text evidence="1">Belongs to the DapB family.</text>
</comment>
<comment type="caution">
    <text evidence="2">Was originally thought to be a dihydrodipicolinate reductase (DHDPR), catalyzing the conversion of dihydrodipicolinate to tetrahydrodipicolinate. However, it was shown in E.coli that the substrate of the enzymatic reaction is not dihydrodipicolinate (DHDP) but in fact (2S,4S)-4-hydroxy-2,3,4,5-tetrahydrodipicolinic acid (HTPA), the product released by the DapA-catalyzed reaction.</text>
</comment>
<gene>
    <name evidence="1" type="primary">dapB</name>
    <name type="ordered locus">GK2185</name>
</gene>
<keyword id="KW-0028">Amino-acid biosynthesis</keyword>
<keyword id="KW-0963">Cytoplasm</keyword>
<keyword id="KW-0220">Diaminopimelate biosynthesis</keyword>
<keyword id="KW-0457">Lysine biosynthesis</keyword>
<keyword id="KW-0520">NAD</keyword>
<keyword id="KW-0521">NADP</keyword>
<keyword id="KW-0560">Oxidoreductase</keyword>
<keyword id="KW-1185">Reference proteome</keyword>
<accession>Q5KXW6</accession>
<sequence>MTIRIAIAGPRGRMGREAVALVQQTDHFELAAVIDRRYDGQNLAEIDGFSGVNAPIYTDAARCFAEVKPDVLIDLTTPEAGKRHTELALRYGVRPVVGTTGFTPEDIERLTKLAEEKEIGAIIAPNFAVGAVLMMKFARMAAKYFTDVEIIELHHDQKLDAPSGTALKTAQLIAEVRPSKKQGHPNEKETLAGARGAEYDGIPIHSVRLPGFVAHQEVIFGGNGQTLTIRHDSFDRRSFMSGVKLAVETVMHLHTLVYGLEHILE</sequence>
<name>DAPB_GEOKA</name>
<feature type="chain" id="PRO_0000228351" description="4-hydroxy-tetrahydrodipicolinate reductase">
    <location>
        <begin position="1"/>
        <end position="265"/>
    </location>
</feature>
<feature type="active site" description="Proton donor/acceptor" evidence="1">
    <location>
        <position position="154"/>
    </location>
</feature>
<feature type="active site" description="Proton donor" evidence="1">
    <location>
        <position position="158"/>
    </location>
</feature>
<feature type="binding site" evidence="1">
    <location>
        <begin position="9"/>
        <end position="14"/>
    </location>
    <ligand>
        <name>NAD(+)</name>
        <dbReference type="ChEBI" id="CHEBI:57540"/>
    </ligand>
</feature>
<feature type="binding site" evidence="1">
    <location>
        <position position="37"/>
    </location>
    <ligand>
        <name>NADP(+)</name>
        <dbReference type="ChEBI" id="CHEBI:58349"/>
    </ligand>
</feature>
<feature type="binding site" evidence="1">
    <location>
        <begin position="98"/>
        <end position="100"/>
    </location>
    <ligand>
        <name>NAD(+)</name>
        <dbReference type="ChEBI" id="CHEBI:57540"/>
    </ligand>
</feature>
<feature type="binding site" evidence="1">
    <location>
        <begin position="124"/>
        <end position="127"/>
    </location>
    <ligand>
        <name>NAD(+)</name>
        <dbReference type="ChEBI" id="CHEBI:57540"/>
    </ligand>
</feature>
<feature type="binding site" evidence="1">
    <location>
        <position position="155"/>
    </location>
    <ligand>
        <name>(S)-2,3,4,5-tetrahydrodipicolinate</name>
        <dbReference type="ChEBI" id="CHEBI:16845"/>
    </ligand>
</feature>
<feature type="binding site" evidence="1">
    <location>
        <begin position="164"/>
        <end position="165"/>
    </location>
    <ligand>
        <name>(S)-2,3,4,5-tetrahydrodipicolinate</name>
        <dbReference type="ChEBI" id="CHEBI:16845"/>
    </ligand>
</feature>
<proteinExistence type="inferred from homology"/>